<comment type="function">
    <text evidence="1">Sigma factors are initiation factors that promote the attachment of RNA polymerase to specific initiation sites and are then released. This sigma factor is the primary sigma factor during exponential growth.</text>
</comment>
<comment type="subunit">
    <text evidence="1">Interacts transiently with the RNA polymerase catalytic core.</text>
</comment>
<comment type="subcellular location">
    <subcellularLocation>
        <location evidence="1">Cytoplasm</location>
    </subcellularLocation>
</comment>
<comment type="similarity">
    <text evidence="1">Belongs to the sigma-70 factor family. RpoD/SigA subfamily.</text>
</comment>
<name>RPOD_CAUVC</name>
<keyword id="KW-0963">Cytoplasm</keyword>
<keyword id="KW-0238">DNA-binding</keyword>
<keyword id="KW-1185">Reference proteome</keyword>
<keyword id="KW-0731">Sigma factor</keyword>
<keyword id="KW-0804">Transcription</keyword>
<keyword id="KW-0805">Transcription regulation</keyword>
<dbReference type="EMBL" id="U35138">
    <property type="protein sequence ID" value="AAA82054.1"/>
    <property type="molecule type" value="Genomic_DNA"/>
</dbReference>
<dbReference type="EMBL" id="AE005673">
    <property type="protein sequence ID" value="AAK25009.1"/>
    <property type="molecule type" value="Genomic_DNA"/>
</dbReference>
<dbReference type="PIR" id="I40676">
    <property type="entry name" value="I40676"/>
</dbReference>
<dbReference type="RefSeq" id="NP_421841.1">
    <property type="nucleotide sequence ID" value="NC_002696.2"/>
</dbReference>
<dbReference type="RefSeq" id="WP_010920883.1">
    <property type="nucleotide sequence ID" value="NC_002696.2"/>
</dbReference>
<dbReference type="SMR" id="P52324"/>
<dbReference type="STRING" id="190650.CC_3047"/>
<dbReference type="EnsemblBacteria" id="AAK25009">
    <property type="protein sequence ID" value="AAK25009"/>
    <property type="gene ID" value="CC_3047"/>
</dbReference>
<dbReference type="KEGG" id="ccr:CC_3047"/>
<dbReference type="PATRIC" id="fig|190650.5.peg.3051"/>
<dbReference type="eggNOG" id="COG0568">
    <property type="taxonomic scope" value="Bacteria"/>
</dbReference>
<dbReference type="HOGENOM" id="CLU_014793_7_2_5"/>
<dbReference type="BioCyc" id="CAULO:CC3047-MONOMER"/>
<dbReference type="Proteomes" id="UP000001816">
    <property type="component" value="Chromosome"/>
</dbReference>
<dbReference type="GO" id="GO:0005737">
    <property type="term" value="C:cytoplasm"/>
    <property type="evidence" value="ECO:0007669"/>
    <property type="project" value="UniProtKB-SubCell"/>
</dbReference>
<dbReference type="GO" id="GO:0003677">
    <property type="term" value="F:DNA binding"/>
    <property type="evidence" value="ECO:0007669"/>
    <property type="project" value="UniProtKB-UniRule"/>
</dbReference>
<dbReference type="GO" id="GO:0016987">
    <property type="term" value="F:sigma factor activity"/>
    <property type="evidence" value="ECO:0007669"/>
    <property type="project" value="UniProtKB-UniRule"/>
</dbReference>
<dbReference type="GO" id="GO:0006352">
    <property type="term" value="P:DNA-templated transcription initiation"/>
    <property type="evidence" value="ECO:0007669"/>
    <property type="project" value="UniProtKB-UniRule"/>
</dbReference>
<dbReference type="CDD" id="cd06171">
    <property type="entry name" value="Sigma70_r4"/>
    <property type="match status" value="1"/>
</dbReference>
<dbReference type="FunFam" id="1.10.10.10:FF:000002">
    <property type="entry name" value="RNA polymerase sigma factor SigA"/>
    <property type="match status" value="1"/>
</dbReference>
<dbReference type="FunFam" id="1.10.10.10:FF:000004">
    <property type="entry name" value="RNA polymerase sigma factor SigA"/>
    <property type="match status" value="1"/>
</dbReference>
<dbReference type="FunFam" id="1.10.601.10:FF:000001">
    <property type="entry name" value="RNA polymerase sigma factor SigA"/>
    <property type="match status" value="1"/>
</dbReference>
<dbReference type="Gene3D" id="1.10.601.10">
    <property type="entry name" value="RNA Polymerase Primary Sigma Factor"/>
    <property type="match status" value="1"/>
</dbReference>
<dbReference type="Gene3D" id="1.10.220.120">
    <property type="entry name" value="Sigma-70 factor, region 1.1"/>
    <property type="match status" value="1"/>
</dbReference>
<dbReference type="Gene3D" id="1.10.10.10">
    <property type="entry name" value="Winged helix-like DNA-binding domain superfamily/Winged helix DNA-binding domain"/>
    <property type="match status" value="2"/>
</dbReference>
<dbReference type="HAMAP" id="MF_00963">
    <property type="entry name" value="Sigma70_RpoD_SigA"/>
    <property type="match status" value="1"/>
</dbReference>
<dbReference type="InterPro" id="IPR014284">
    <property type="entry name" value="RNA_pol_sigma-70_dom"/>
</dbReference>
<dbReference type="InterPro" id="IPR000943">
    <property type="entry name" value="RNA_pol_sigma70"/>
</dbReference>
<dbReference type="InterPro" id="IPR009042">
    <property type="entry name" value="RNA_pol_sigma70_r1_2"/>
</dbReference>
<dbReference type="InterPro" id="IPR007627">
    <property type="entry name" value="RNA_pol_sigma70_r2"/>
</dbReference>
<dbReference type="InterPro" id="IPR007624">
    <property type="entry name" value="RNA_pol_sigma70_r3"/>
</dbReference>
<dbReference type="InterPro" id="IPR007630">
    <property type="entry name" value="RNA_pol_sigma70_r4"/>
</dbReference>
<dbReference type="InterPro" id="IPR007631">
    <property type="entry name" value="RNA_pol_sigma_70_non-ess"/>
</dbReference>
<dbReference type="InterPro" id="IPR007127">
    <property type="entry name" value="RNA_pol_sigma_70_r1_1"/>
</dbReference>
<dbReference type="InterPro" id="IPR042189">
    <property type="entry name" value="RNA_pol_sigma_70_r1_1_sf"/>
</dbReference>
<dbReference type="InterPro" id="IPR013325">
    <property type="entry name" value="RNA_pol_sigma_r2"/>
</dbReference>
<dbReference type="InterPro" id="IPR013324">
    <property type="entry name" value="RNA_pol_sigma_r3/r4-like"/>
</dbReference>
<dbReference type="InterPro" id="IPR012760">
    <property type="entry name" value="RNA_pol_sigma_RpoD_C"/>
</dbReference>
<dbReference type="InterPro" id="IPR050239">
    <property type="entry name" value="Sigma-70_RNA_pol_init_factors"/>
</dbReference>
<dbReference type="InterPro" id="IPR028630">
    <property type="entry name" value="Sigma70_RpoD"/>
</dbReference>
<dbReference type="InterPro" id="IPR036388">
    <property type="entry name" value="WH-like_DNA-bd_sf"/>
</dbReference>
<dbReference type="NCBIfam" id="NF004208">
    <property type="entry name" value="PRK05658.1"/>
    <property type="match status" value="1"/>
</dbReference>
<dbReference type="NCBIfam" id="TIGR02393">
    <property type="entry name" value="RpoD_Cterm"/>
    <property type="match status" value="1"/>
</dbReference>
<dbReference type="NCBIfam" id="TIGR02937">
    <property type="entry name" value="sigma70-ECF"/>
    <property type="match status" value="1"/>
</dbReference>
<dbReference type="PANTHER" id="PTHR30603">
    <property type="entry name" value="RNA POLYMERASE SIGMA FACTOR RPO"/>
    <property type="match status" value="1"/>
</dbReference>
<dbReference type="PANTHER" id="PTHR30603:SF60">
    <property type="entry name" value="RNA POLYMERASE SIGMA FACTOR RPOD"/>
    <property type="match status" value="1"/>
</dbReference>
<dbReference type="Pfam" id="PF04546">
    <property type="entry name" value="Sigma70_ner"/>
    <property type="match status" value="1"/>
</dbReference>
<dbReference type="Pfam" id="PF03979">
    <property type="entry name" value="Sigma70_r1_1"/>
    <property type="match status" value="1"/>
</dbReference>
<dbReference type="Pfam" id="PF00140">
    <property type="entry name" value="Sigma70_r1_2"/>
    <property type="match status" value="1"/>
</dbReference>
<dbReference type="Pfam" id="PF04542">
    <property type="entry name" value="Sigma70_r2"/>
    <property type="match status" value="1"/>
</dbReference>
<dbReference type="Pfam" id="PF04539">
    <property type="entry name" value="Sigma70_r3"/>
    <property type="match status" value="1"/>
</dbReference>
<dbReference type="Pfam" id="PF04545">
    <property type="entry name" value="Sigma70_r4"/>
    <property type="match status" value="1"/>
</dbReference>
<dbReference type="PRINTS" id="PR00046">
    <property type="entry name" value="SIGMA70FCT"/>
</dbReference>
<dbReference type="SUPFAM" id="SSF88946">
    <property type="entry name" value="Sigma2 domain of RNA polymerase sigma factors"/>
    <property type="match status" value="1"/>
</dbReference>
<dbReference type="SUPFAM" id="SSF88659">
    <property type="entry name" value="Sigma3 and sigma4 domains of RNA polymerase sigma factors"/>
    <property type="match status" value="2"/>
</dbReference>
<dbReference type="PROSITE" id="PS00715">
    <property type="entry name" value="SIGMA70_1"/>
    <property type="match status" value="1"/>
</dbReference>
<dbReference type="PROSITE" id="PS00716">
    <property type="entry name" value="SIGMA70_2"/>
    <property type="match status" value="1"/>
</dbReference>
<accession>P52324</accession>
<gene>
    <name evidence="1" type="primary">rpoD</name>
    <name type="ordered locus">CC_3047</name>
</gene>
<protein>
    <recommendedName>
        <fullName evidence="1">RNA polymerase sigma factor RpoD</fullName>
    </recommendedName>
    <alternativeName>
        <fullName evidence="1">Sigma-70</fullName>
    </alternativeName>
</protein>
<organism>
    <name type="scientific">Caulobacter vibrioides (strain ATCC 19089 / CIP 103742 / CB 15)</name>
    <name type="common">Caulobacter crescentus</name>
    <dbReference type="NCBI Taxonomy" id="190650"/>
    <lineage>
        <taxon>Bacteria</taxon>
        <taxon>Pseudomonadati</taxon>
        <taxon>Pseudomonadota</taxon>
        <taxon>Alphaproteobacteria</taxon>
        <taxon>Caulobacterales</taxon>
        <taxon>Caulobacteraceae</taxon>
        <taxon>Caulobacter</taxon>
    </lineage>
</organism>
<reference key="1">
    <citation type="journal article" date="1995" name="J. Bacteriol.">
        <title>A consensus promoter sequence for Caulobacter crescentus genes involved in biosynthetic and housekeeping functions.</title>
        <authorList>
            <person name="Malakooti J."/>
            <person name="Wang S.P."/>
            <person name="Ely B."/>
        </authorList>
    </citation>
    <scope>NUCLEOTIDE SEQUENCE [GENOMIC DNA]</scope>
    <source>
        <strain>ATCC 19089 / CIP 103742 / CB 15</strain>
    </source>
</reference>
<reference key="2">
    <citation type="journal article" date="2001" name="Proc. Natl. Acad. Sci. U.S.A.">
        <title>Complete genome sequence of Caulobacter crescentus.</title>
        <authorList>
            <person name="Nierman W.C."/>
            <person name="Feldblyum T.V."/>
            <person name="Laub M.T."/>
            <person name="Paulsen I.T."/>
            <person name="Nelson K.E."/>
            <person name="Eisen J.A."/>
            <person name="Heidelberg J.F."/>
            <person name="Alley M.R.K."/>
            <person name="Ohta N."/>
            <person name="Maddock J.R."/>
            <person name="Potocka I."/>
            <person name="Nelson W.C."/>
            <person name="Newton A."/>
            <person name="Stephens C."/>
            <person name="Phadke N.D."/>
            <person name="Ely B."/>
            <person name="DeBoy R.T."/>
            <person name="Dodson R.J."/>
            <person name="Durkin A.S."/>
            <person name="Gwinn M.L."/>
            <person name="Haft D.H."/>
            <person name="Kolonay J.F."/>
            <person name="Smit J."/>
            <person name="Craven M.B."/>
            <person name="Khouri H.M."/>
            <person name="Shetty J."/>
            <person name="Berry K.J."/>
            <person name="Utterback T.R."/>
            <person name="Tran K."/>
            <person name="Wolf A.M."/>
            <person name="Vamathevan J.J."/>
            <person name="Ermolaeva M.D."/>
            <person name="White O."/>
            <person name="Salzberg S.L."/>
            <person name="Venter J.C."/>
            <person name="Shapiro L."/>
            <person name="Fraser C.M."/>
        </authorList>
    </citation>
    <scope>NUCLEOTIDE SEQUENCE [LARGE SCALE GENOMIC DNA]</scope>
    <source>
        <strain>ATCC 19089 / CIP 103742 / CB 15</strain>
    </source>
</reference>
<sequence>MSNNSSAETEAPETTGGDGPLLDLTDAGVKKFIKQAKARGYVTMDELNKVLPSEEVSPDAIEDTLAMLSEMGVNVVEAEEDAENAEGGEVATRDENTTVIASDKPAAYDRTDDPVRMYLREMGSVELLSREGEIAIAKRIEAGRDTMIRGLCESALTFEAIMVWREELGTGRILLREVIDLEGTYAAINGVAAQPAAEDDEGPAEPVDDEAGEAKAEGAEGEDEDDFDDGAGPTVSAMEGELREGVMAILDAIASEFEAFRKLQDKLVGSRLKGEDLSDADRKAYEGLSATIIQHLKTLKLNNNRIEALVEQLYAINKRLIGLEGRLLRLADSYGISRGEFLKAYFGSELNPTWSEQVKAMGVRWTKFVENDSQSVTDIRSEIAALATETGVPIDDYRRIVQTVQKGEREARQAKKEMVEANLRLVISIAKKYTNRGLQFLDLIQEGNIGLMKAVDKFEYRRGYKFSTYATWWIRQAITRSIADQARTIRIPVHMIETINKIVRTSRQMLHEIGREPTPEELAEKLAMPLEKVRKVLKIAKEPISLETPIGDEEDSHLGDFIEDKNAILPIDAAIQSNLRETTTRVLASLTPREERVLRMRFGIGMNTDHTLEEVGQQFSVTRERIRQIEAKALRKLKHPSRSRKLRSFLDS</sequence>
<feature type="chain" id="PRO_0000093880" description="RNA polymerase sigma factor RpoD">
    <location>
        <begin position="1"/>
        <end position="652"/>
    </location>
</feature>
<feature type="DNA-binding region" description="H-T-H motif" evidence="1">
    <location>
        <begin position="612"/>
        <end position="631"/>
    </location>
</feature>
<feature type="region of interest" description="Disordered" evidence="2">
    <location>
        <begin position="1"/>
        <end position="24"/>
    </location>
</feature>
<feature type="region of interest" description="Disordered" evidence="2">
    <location>
        <begin position="194"/>
        <end position="236"/>
    </location>
</feature>
<feature type="region of interest" description="Sigma-70 factor domain-2" evidence="1">
    <location>
        <begin position="418"/>
        <end position="488"/>
    </location>
</feature>
<feature type="region of interest" description="Sigma-70 factor domain-3" evidence="1">
    <location>
        <begin position="497"/>
        <end position="573"/>
    </location>
</feature>
<feature type="region of interest" description="Sigma-70 factor domain-4" evidence="1">
    <location>
        <begin position="586"/>
        <end position="639"/>
    </location>
</feature>
<feature type="short sequence motif" description="Interaction with polymerase core subunit RpoC">
    <location>
        <begin position="442"/>
        <end position="445"/>
    </location>
</feature>
<feature type="compositionally biased region" description="Acidic residues" evidence="2">
    <location>
        <begin position="197"/>
        <end position="211"/>
    </location>
</feature>
<feature type="compositionally biased region" description="Acidic residues" evidence="2">
    <location>
        <begin position="219"/>
        <end position="229"/>
    </location>
</feature>
<evidence type="ECO:0000255" key="1">
    <source>
        <dbReference type="HAMAP-Rule" id="MF_00963"/>
    </source>
</evidence>
<evidence type="ECO:0000256" key="2">
    <source>
        <dbReference type="SAM" id="MobiDB-lite"/>
    </source>
</evidence>
<proteinExistence type="inferred from homology"/>